<comment type="function">
    <text evidence="5">Microtubule-binding protein required to ensure proper cell division and nuclear envelope reassembly by sequestering the endoplasmic reticulum away from chromosomes during mitosis. Probably acts by clearing the endoplasmic reticulum membrane from metaphase chromosomes.</text>
</comment>
<comment type="interaction">
    <interactant intactId="EBI-7545786">
        <id>Q6NUK4</id>
    </interactant>
    <interactant intactId="EBI-476295">
        <id>P31947</id>
        <label>SFN</label>
    </interactant>
    <organismsDiffer>false</organismsDiffer>
    <experiments>2</experiments>
</comment>
<comment type="interaction">
    <interactant intactId="EBI-7545786">
        <id>Q6NUK4</id>
    </interactant>
    <interactant intactId="EBI-10243654">
        <id>Q5BVD1</id>
        <label>TTMP</label>
    </interactant>
    <organismsDiffer>false</organismsDiffer>
    <experiments>3</experiments>
</comment>
<comment type="subcellular location">
    <subcellularLocation>
        <location evidence="1">Endoplasmic reticulum membrane</location>
        <topology evidence="1">Multi-pass membrane protein</topology>
    </subcellularLocation>
</comment>
<comment type="alternative products">
    <event type="alternative splicing"/>
    <isoform>
        <id>Q6NUK4-1</id>
        <name>1</name>
        <sequence type="displayed"/>
    </isoform>
    <isoform>
        <id>Q6NUK4-2</id>
        <name>2</name>
        <sequence type="described" ref="VSP_016634 VSP_016635"/>
    </isoform>
</comment>
<comment type="tissue specificity">
    <text evidence="4">Expressed in circumvallate papillae.</text>
</comment>
<comment type="similarity">
    <text evidence="7">Belongs to the DP1 family.</text>
</comment>
<comment type="sequence caution" evidence="7">
    <conflict type="miscellaneous discrepancy">
        <sequence resource="EMBL-CDS" id="AAH10040"/>
    </conflict>
    <text>Contaminating sequence. Potential poly-A sequence.</text>
</comment>
<dbReference type="EMBL" id="AY562241">
    <property type="protein sequence ID" value="AAT70686.1"/>
    <property type="molecule type" value="mRNA"/>
</dbReference>
<dbReference type="EMBL" id="AC022022">
    <property type="status" value="NOT_ANNOTATED_CDS"/>
    <property type="molecule type" value="Genomic_DNA"/>
</dbReference>
<dbReference type="EMBL" id="AL607062">
    <property type="status" value="NOT_ANNOTATED_CDS"/>
    <property type="molecule type" value="Genomic_DNA"/>
</dbReference>
<dbReference type="EMBL" id="BC010040">
    <property type="protein sequence ID" value="AAH10040.1"/>
    <property type="status" value="ALT_SEQ"/>
    <property type="molecule type" value="mRNA"/>
</dbReference>
<dbReference type="EMBL" id="BC057832">
    <property type="protein sequence ID" value="AAH57832.1"/>
    <property type="molecule type" value="mRNA"/>
</dbReference>
<dbReference type="EMBL" id="BC068557">
    <property type="protein sequence ID" value="AAH68557.1"/>
    <property type="molecule type" value="mRNA"/>
</dbReference>
<dbReference type="CCDS" id="CCDS44411.1">
    <molecule id="Q6NUK4-1"/>
</dbReference>
<dbReference type="RefSeq" id="NP_001001330.1">
    <molecule id="Q6NUK4-1"/>
    <property type="nucleotide sequence ID" value="NM_001001330.3"/>
</dbReference>
<dbReference type="BioGRID" id="128676">
    <property type="interactions" value="37"/>
</dbReference>
<dbReference type="FunCoup" id="Q6NUK4">
    <property type="interactions" value="644"/>
</dbReference>
<dbReference type="IntAct" id="Q6NUK4">
    <property type="interactions" value="20"/>
</dbReference>
<dbReference type="MINT" id="Q6NUK4"/>
<dbReference type="STRING" id="9606.ENSP00000362863"/>
<dbReference type="GlyGen" id="Q6NUK4">
    <property type="glycosylation" value="1 site"/>
</dbReference>
<dbReference type="iPTMnet" id="Q6NUK4"/>
<dbReference type="PhosphoSitePlus" id="Q6NUK4"/>
<dbReference type="BioMuta" id="REEP3"/>
<dbReference type="DMDM" id="74736808"/>
<dbReference type="jPOST" id="Q6NUK4"/>
<dbReference type="MassIVE" id="Q6NUK4"/>
<dbReference type="PaxDb" id="9606-ENSP00000362863"/>
<dbReference type="PeptideAtlas" id="Q6NUK4"/>
<dbReference type="ProteomicsDB" id="66687">
    <molecule id="Q6NUK4-1"/>
</dbReference>
<dbReference type="ProteomicsDB" id="66688">
    <molecule id="Q6NUK4-2"/>
</dbReference>
<dbReference type="Pumba" id="Q6NUK4"/>
<dbReference type="Antibodypedia" id="45181">
    <property type="antibodies" value="80 antibodies from 22 providers"/>
</dbReference>
<dbReference type="DNASU" id="221035"/>
<dbReference type="Ensembl" id="ENST00000373758.5">
    <molecule id="Q6NUK4-1"/>
    <property type="protein sequence ID" value="ENSP00000362863.4"/>
    <property type="gene ID" value="ENSG00000165476.14"/>
</dbReference>
<dbReference type="GeneID" id="221035"/>
<dbReference type="KEGG" id="hsa:221035"/>
<dbReference type="MANE-Select" id="ENST00000373758.5">
    <property type="protein sequence ID" value="ENSP00000362863.4"/>
    <property type="RefSeq nucleotide sequence ID" value="NM_001001330.3"/>
    <property type="RefSeq protein sequence ID" value="NP_001001330.1"/>
</dbReference>
<dbReference type="AGR" id="HGNC:23711"/>
<dbReference type="CTD" id="221035"/>
<dbReference type="DisGeNET" id="221035"/>
<dbReference type="GeneCards" id="REEP3"/>
<dbReference type="HGNC" id="HGNC:23711">
    <property type="gene designation" value="REEP3"/>
</dbReference>
<dbReference type="HPA" id="ENSG00000165476">
    <property type="expression patterns" value="Low tissue specificity"/>
</dbReference>
<dbReference type="MIM" id="609348">
    <property type="type" value="gene"/>
</dbReference>
<dbReference type="neXtProt" id="NX_Q6NUK4"/>
<dbReference type="OpenTargets" id="ENSG00000165476"/>
<dbReference type="PharmGKB" id="PA134863406"/>
<dbReference type="VEuPathDB" id="HostDB:ENSG00000165476"/>
<dbReference type="eggNOG" id="KOG1726">
    <property type="taxonomic scope" value="Eukaryota"/>
</dbReference>
<dbReference type="GeneTree" id="ENSGT00940000158794"/>
<dbReference type="HOGENOM" id="CLU_028431_0_1_1"/>
<dbReference type="InParanoid" id="Q6NUK4"/>
<dbReference type="OMA" id="PIGQRHY"/>
<dbReference type="OrthoDB" id="434647at2759"/>
<dbReference type="PAN-GO" id="Q6NUK4">
    <property type="GO annotations" value="5 GO annotations based on evolutionary models"/>
</dbReference>
<dbReference type="PhylomeDB" id="Q6NUK4"/>
<dbReference type="TreeFam" id="TF314177"/>
<dbReference type="PathwayCommons" id="Q6NUK4"/>
<dbReference type="SignaLink" id="Q6NUK4"/>
<dbReference type="BioGRID-ORCS" id="221035">
    <property type="hits" value="5 hits in 1119 CRISPR screens"/>
</dbReference>
<dbReference type="ChiTaRS" id="REEP3">
    <property type="organism name" value="human"/>
</dbReference>
<dbReference type="GenomeRNAi" id="221035"/>
<dbReference type="Pharos" id="Q6NUK4">
    <property type="development level" value="Tbio"/>
</dbReference>
<dbReference type="PRO" id="PR:Q6NUK4"/>
<dbReference type="Proteomes" id="UP000005640">
    <property type="component" value="Chromosome 10"/>
</dbReference>
<dbReference type="RNAct" id="Q6NUK4">
    <property type="molecule type" value="protein"/>
</dbReference>
<dbReference type="Bgee" id="ENSG00000165476">
    <property type="expression patterns" value="Expressed in palpebral conjunctiva and 193 other cell types or tissues"/>
</dbReference>
<dbReference type="ExpressionAtlas" id="Q6NUK4">
    <property type="expression patterns" value="baseline and differential"/>
</dbReference>
<dbReference type="GO" id="GO:0005881">
    <property type="term" value="C:cytoplasmic microtubule"/>
    <property type="evidence" value="ECO:0000318"/>
    <property type="project" value="GO_Central"/>
</dbReference>
<dbReference type="GO" id="GO:0005789">
    <property type="term" value="C:endoplasmic reticulum membrane"/>
    <property type="evidence" value="ECO:0000318"/>
    <property type="project" value="GO_Central"/>
</dbReference>
<dbReference type="GO" id="GO:0071782">
    <property type="term" value="C:endoplasmic reticulum tubular network"/>
    <property type="evidence" value="ECO:0000318"/>
    <property type="project" value="GO_Central"/>
</dbReference>
<dbReference type="GO" id="GO:0008017">
    <property type="term" value="F:microtubule binding"/>
    <property type="evidence" value="ECO:0000318"/>
    <property type="project" value="GO_Central"/>
</dbReference>
<dbReference type="GO" id="GO:0051301">
    <property type="term" value="P:cell division"/>
    <property type="evidence" value="ECO:0007669"/>
    <property type="project" value="UniProtKB-KW"/>
</dbReference>
<dbReference type="GO" id="GO:0071786">
    <property type="term" value="P:endoplasmic reticulum tubular network organization"/>
    <property type="evidence" value="ECO:0000318"/>
    <property type="project" value="GO_Central"/>
</dbReference>
<dbReference type="GO" id="GO:0007084">
    <property type="term" value="P:mitotic nuclear membrane reassembly"/>
    <property type="evidence" value="ECO:0000315"/>
    <property type="project" value="UniProtKB"/>
</dbReference>
<dbReference type="GO" id="GO:0006998">
    <property type="term" value="P:nuclear envelope organization"/>
    <property type="evidence" value="ECO:0000315"/>
    <property type="project" value="UniProtKB"/>
</dbReference>
<dbReference type="InterPro" id="IPR004345">
    <property type="entry name" value="TB2_DP1_HVA22"/>
</dbReference>
<dbReference type="PANTHER" id="PTHR12300">
    <property type="entry name" value="HVA22-LIKE PROTEINS"/>
    <property type="match status" value="1"/>
</dbReference>
<dbReference type="PANTHER" id="PTHR12300:SF39">
    <property type="entry name" value="RECEPTOR EXPRESSION-ENHANCING PROTEIN 3"/>
    <property type="match status" value="1"/>
</dbReference>
<dbReference type="Pfam" id="PF03134">
    <property type="entry name" value="TB2_DP1_HVA22"/>
    <property type="match status" value="1"/>
</dbReference>
<protein>
    <recommendedName>
        <fullName>Receptor expression-enhancing protein 3</fullName>
    </recommendedName>
</protein>
<proteinExistence type="evidence at protein level"/>
<keyword id="KW-0025">Alternative splicing</keyword>
<keyword id="KW-0131">Cell cycle</keyword>
<keyword id="KW-0132">Cell division</keyword>
<keyword id="KW-0256">Endoplasmic reticulum</keyword>
<keyword id="KW-0472">Membrane</keyword>
<keyword id="KW-0493">Microtubule</keyword>
<keyword id="KW-0498">Mitosis</keyword>
<keyword id="KW-0597">Phosphoprotein</keyword>
<keyword id="KW-1267">Proteomics identification</keyword>
<keyword id="KW-1185">Reference proteome</keyword>
<keyword id="KW-0812">Transmembrane</keyword>
<keyword id="KW-1133">Transmembrane helix</keyword>
<evidence type="ECO:0000250" key="1"/>
<evidence type="ECO:0000255" key="2"/>
<evidence type="ECO:0000256" key="3">
    <source>
        <dbReference type="SAM" id="MobiDB-lite"/>
    </source>
</evidence>
<evidence type="ECO:0000269" key="4">
    <source>
    </source>
</evidence>
<evidence type="ECO:0000269" key="5">
    <source>
    </source>
</evidence>
<evidence type="ECO:0000303" key="6">
    <source>
    </source>
</evidence>
<evidence type="ECO:0000305" key="7"/>
<evidence type="ECO:0007744" key="8">
    <source>
    </source>
</evidence>
<feature type="chain" id="PRO_0000101826" description="Receptor expression-enhancing protein 3">
    <location>
        <begin position="1"/>
        <end position="255"/>
    </location>
</feature>
<feature type="transmembrane region" description="Helical" evidence="2">
    <location>
        <begin position="1"/>
        <end position="21"/>
    </location>
</feature>
<feature type="transmembrane region" description="Helical" evidence="2">
    <location>
        <begin position="35"/>
        <end position="55"/>
    </location>
</feature>
<feature type="transmembrane region" description="Helical" evidence="2">
    <location>
        <begin position="59"/>
        <end position="79"/>
    </location>
</feature>
<feature type="region of interest" description="Disordered" evidence="3">
    <location>
        <begin position="158"/>
        <end position="242"/>
    </location>
</feature>
<feature type="compositionally biased region" description="Polar residues" evidence="3">
    <location>
        <begin position="222"/>
        <end position="231"/>
    </location>
</feature>
<feature type="modified residue" description="Phosphothreonine" evidence="8">
    <location>
        <position position="201"/>
    </location>
</feature>
<feature type="modified residue" description="Phosphoserine" evidence="8">
    <location>
        <position position="210"/>
    </location>
</feature>
<feature type="splice variant" id="VSP_016634" description="In isoform 2." evidence="6">
    <original>SQGAITERLRSFSMHDLTTIQGDEPVGQRPY</original>
    <variation>VIVHLPF</variation>
    <location>
        <begin position="140"/>
        <end position="170"/>
    </location>
</feature>
<feature type="splice variant" id="VSP_016635" description="In isoform 2." evidence="6">
    <location>
        <begin position="171"/>
        <end position="255"/>
    </location>
</feature>
<feature type="sequence variant" id="VAR_048926" description="In dbSNP:rs10995569.">
    <original>Q</original>
    <variation>R</variation>
    <location>
        <position position="171"/>
    </location>
</feature>
<name>REEP3_HUMAN</name>
<reference key="1">
    <citation type="journal article" date="2004" name="Cell">
        <title>RTP family members induce functional expression of mammalian odorant receptors.</title>
        <authorList>
            <person name="Saito H."/>
            <person name="Kubota M."/>
            <person name="Roberts R.W."/>
            <person name="Chi Q."/>
            <person name="Matsunami H."/>
        </authorList>
    </citation>
    <scope>NUCLEOTIDE SEQUENCE [MRNA] (ISOFORM 2)</scope>
</reference>
<reference key="2">
    <citation type="journal article" date="2004" name="Nature">
        <title>The DNA sequence and comparative analysis of human chromosome 10.</title>
        <authorList>
            <person name="Deloukas P."/>
            <person name="Earthrowl M.E."/>
            <person name="Grafham D.V."/>
            <person name="Rubenfield M."/>
            <person name="French L."/>
            <person name="Steward C.A."/>
            <person name="Sims S.K."/>
            <person name="Jones M.C."/>
            <person name="Searle S."/>
            <person name="Scott C."/>
            <person name="Howe K."/>
            <person name="Hunt S.E."/>
            <person name="Andrews T.D."/>
            <person name="Gilbert J.G.R."/>
            <person name="Swarbreck D."/>
            <person name="Ashurst J.L."/>
            <person name="Taylor A."/>
            <person name="Battles J."/>
            <person name="Bird C.P."/>
            <person name="Ainscough R."/>
            <person name="Almeida J.P."/>
            <person name="Ashwell R.I.S."/>
            <person name="Ambrose K.D."/>
            <person name="Babbage A.K."/>
            <person name="Bagguley C.L."/>
            <person name="Bailey J."/>
            <person name="Banerjee R."/>
            <person name="Bates K."/>
            <person name="Beasley H."/>
            <person name="Bray-Allen S."/>
            <person name="Brown A.J."/>
            <person name="Brown J.Y."/>
            <person name="Burford D.C."/>
            <person name="Burrill W."/>
            <person name="Burton J."/>
            <person name="Cahill P."/>
            <person name="Camire D."/>
            <person name="Carter N.P."/>
            <person name="Chapman J.C."/>
            <person name="Clark S.Y."/>
            <person name="Clarke G."/>
            <person name="Clee C.M."/>
            <person name="Clegg S."/>
            <person name="Corby N."/>
            <person name="Coulson A."/>
            <person name="Dhami P."/>
            <person name="Dutta I."/>
            <person name="Dunn M."/>
            <person name="Faulkner L."/>
            <person name="Frankish A."/>
            <person name="Frankland J.A."/>
            <person name="Garner P."/>
            <person name="Garnett J."/>
            <person name="Gribble S."/>
            <person name="Griffiths C."/>
            <person name="Grocock R."/>
            <person name="Gustafson E."/>
            <person name="Hammond S."/>
            <person name="Harley J.L."/>
            <person name="Hart E."/>
            <person name="Heath P.D."/>
            <person name="Ho T.P."/>
            <person name="Hopkins B."/>
            <person name="Horne J."/>
            <person name="Howden P.J."/>
            <person name="Huckle E."/>
            <person name="Hynds C."/>
            <person name="Johnson C."/>
            <person name="Johnson D."/>
            <person name="Kana A."/>
            <person name="Kay M."/>
            <person name="Kimberley A.M."/>
            <person name="Kershaw J.K."/>
            <person name="Kokkinaki M."/>
            <person name="Laird G.K."/>
            <person name="Lawlor S."/>
            <person name="Lee H.M."/>
            <person name="Leongamornlert D.A."/>
            <person name="Laird G."/>
            <person name="Lloyd C."/>
            <person name="Lloyd D.M."/>
            <person name="Loveland J."/>
            <person name="Lovell J."/>
            <person name="McLaren S."/>
            <person name="McLay K.E."/>
            <person name="McMurray A."/>
            <person name="Mashreghi-Mohammadi M."/>
            <person name="Matthews L."/>
            <person name="Milne S."/>
            <person name="Nickerson T."/>
            <person name="Nguyen M."/>
            <person name="Overton-Larty E."/>
            <person name="Palmer S.A."/>
            <person name="Pearce A.V."/>
            <person name="Peck A.I."/>
            <person name="Pelan S."/>
            <person name="Phillimore B."/>
            <person name="Porter K."/>
            <person name="Rice C.M."/>
            <person name="Rogosin A."/>
            <person name="Ross M.T."/>
            <person name="Sarafidou T."/>
            <person name="Sehra H.K."/>
            <person name="Shownkeen R."/>
            <person name="Skuce C.D."/>
            <person name="Smith M."/>
            <person name="Standring L."/>
            <person name="Sycamore N."/>
            <person name="Tester J."/>
            <person name="Thorpe A."/>
            <person name="Torcasso W."/>
            <person name="Tracey A."/>
            <person name="Tromans A."/>
            <person name="Tsolas J."/>
            <person name="Wall M."/>
            <person name="Walsh J."/>
            <person name="Wang H."/>
            <person name="Weinstock K."/>
            <person name="West A.P."/>
            <person name="Willey D.L."/>
            <person name="Whitehead S.L."/>
            <person name="Wilming L."/>
            <person name="Wray P.W."/>
            <person name="Young L."/>
            <person name="Chen Y."/>
            <person name="Lovering R.C."/>
            <person name="Moschonas N.K."/>
            <person name="Siebert R."/>
            <person name="Fechtel K."/>
            <person name="Bentley D."/>
            <person name="Durbin R.M."/>
            <person name="Hubbard T."/>
            <person name="Doucette-Stamm L."/>
            <person name="Beck S."/>
            <person name="Smith D.R."/>
            <person name="Rogers J."/>
        </authorList>
    </citation>
    <scope>NUCLEOTIDE SEQUENCE [LARGE SCALE GENOMIC DNA]</scope>
</reference>
<reference key="3">
    <citation type="journal article" date="2004" name="Genome Res.">
        <title>The status, quality, and expansion of the NIH full-length cDNA project: the Mammalian Gene Collection (MGC).</title>
        <authorList>
            <consortium name="The MGC Project Team"/>
        </authorList>
    </citation>
    <scope>NUCLEOTIDE SEQUENCE [LARGE SCALE MRNA] (ISOFORM 1)</scope>
    <source>
        <tissue>Placenta</tissue>
        <tissue>Uterus</tissue>
    </source>
</reference>
<reference key="4">
    <citation type="journal article" date="2006" name="J. Biol. Chem.">
        <title>Members of RTP and REEP gene families influence functional bitter taste receptor expression.</title>
        <authorList>
            <person name="Behrens M."/>
            <person name="Bartelt J."/>
            <person name="Reichling C."/>
            <person name="Winnig M."/>
            <person name="Kuhn C."/>
            <person name="Meyerhof W."/>
        </authorList>
    </citation>
    <scope>TISSUE SPECIFICITY</scope>
</reference>
<reference key="5">
    <citation type="journal article" date="2007" name="Eur. J. Hum. Genet.">
        <title>Identification and characterization of the TRIP8 and REEP3 genes on chromosome 10q21.3 as novel candidate genes for autism.</title>
        <authorList>
            <person name="Castermans D."/>
            <person name="Vermeesch J.R."/>
            <person name="Fryns J.P."/>
            <person name="Steyaert J.G."/>
            <person name="Van de Ven W.J."/>
            <person name="Creemers J.W."/>
            <person name="Devriendt K."/>
        </authorList>
    </citation>
    <scope>IDENTIFICATION</scope>
</reference>
<reference key="6">
    <citation type="journal article" date="2008" name="Proc. Natl. Acad. Sci. U.S.A.">
        <title>A quantitative atlas of mitotic phosphorylation.</title>
        <authorList>
            <person name="Dephoure N."/>
            <person name="Zhou C."/>
            <person name="Villen J."/>
            <person name="Beausoleil S.A."/>
            <person name="Bakalarski C.E."/>
            <person name="Elledge S.J."/>
            <person name="Gygi S.P."/>
        </authorList>
    </citation>
    <scope>IDENTIFICATION BY MASS SPECTROMETRY [LARGE SCALE ANALYSIS]</scope>
    <source>
        <tissue>Cervix carcinoma</tissue>
    </source>
</reference>
<reference key="7">
    <citation type="journal article" date="2011" name="Sci. Signal.">
        <title>System-wide temporal characterization of the proteome and phosphoproteome of human embryonic stem cell differentiation.</title>
        <authorList>
            <person name="Rigbolt K.T."/>
            <person name="Prokhorova T.A."/>
            <person name="Akimov V."/>
            <person name="Henningsen J."/>
            <person name="Johansen P.T."/>
            <person name="Kratchmarova I."/>
            <person name="Kassem M."/>
            <person name="Mann M."/>
            <person name="Olsen J.V."/>
            <person name="Blagoev B."/>
        </authorList>
    </citation>
    <scope>PHOSPHORYLATION [LARGE SCALE ANALYSIS] AT THR-201 AND SER-210</scope>
    <scope>IDENTIFICATION BY MASS SPECTROMETRY [LARGE SCALE ANALYSIS]</scope>
</reference>
<reference key="8">
    <citation type="journal article" date="2013" name="Dev. Cell">
        <title>REEP3/4 ensure endoplasmic reticulum clearance from metaphase chromatin and proper nuclear envelope architecture.</title>
        <authorList>
            <person name="Schlaitz A.L."/>
            <person name="Thompson J."/>
            <person name="Wong C.C."/>
            <person name="Yates J.R. III"/>
            <person name="Heald R."/>
        </authorList>
    </citation>
    <scope>FUNCTION</scope>
</reference>
<reference key="9">
    <citation type="journal article" date="2013" name="J. Proteome Res.">
        <title>Toward a comprehensive characterization of a human cancer cell phosphoproteome.</title>
        <authorList>
            <person name="Zhou H."/>
            <person name="Di Palma S."/>
            <person name="Preisinger C."/>
            <person name="Peng M."/>
            <person name="Polat A.N."/>
            <person name="Heck A.J."/>
            <person name="Mohammed S."/>
        </authorList>
    </citation>
    <scope>IDENTIFICATION BY MASS SPECTROMETRY [LARGE SCALE ANALYSIS]</scope>
    <source>
        <tissue>Cervix carcinoma</tissue>
        <tissue>Erythroleukemia</tissue>
    </source>
</reference>
<accession>Q6NUK4</accession>
<accession>Q5JQR5</accession>
<accession>Q5QGT2</accession>
<accession>Q6PEW8</accession>
<accession>Q6PJY4</accession>
<gene>
    <name type="primary">REEP3</name>
    <name type="synonym">C10orf74</name>
</gene>
<sequence length="255" mass="29264">MVSWMISRAVVLVFGMLYPAYYSYKAVKTKNVKEYVRWMMYWIVFALYTVIETVADQTVAWFPLYYELKIAFVIWLLSPYTKGASLIYRKFLHPLLSSKEREIDDYIVQAKERGYETMVNFGRQGLNLAATAAVTAAVKSQGAITERLRSFSMHDLTTIQGDEPVGQRPYQPLPEAKKKSKPAPSESAGYGIPLKDGDEKTDEEAEGPYSDNEMLTHKGLRRSQSMKSVKTTKGRKEVRYGSLKYKVKKRPQVYF</sequence>
<organism>
    <name type="scientific">Homo sapiens</name>
    <name type="common">Human</name>
    <dbReference type="NCBI Taxonomy" id="9606"/>
    <lineage>
        <taxon>Eukaryota</taxon>
        <taxon>Metazoa</taxon>
        <taxon>Chordata</taxon>
        <taxon>Craniata</taxon>
        <taxon>Vertebrata</taxon>
        <taxon>Euteleostomi</taxon>
        <taxon>Mammalia</taxon>
        <taxon>Eutheria</taxon>
        <taxon>Euarchontoglires</taxon>
        <taxon>Primates</taxon>
        <taxon>Haplorrhini</taxon>
        <taxon>Catarrhini</taxon>
        <taxon>Hominidae</taxon>
        <taxon>Homo</taxon>
    </lineage>
</organism>